<sequence>MGRKSSKAKEKKQKRLEERAAMDAVCAKVDAANRLGDPLEAFPVFKKYDRNGLNVSIECKRVSGLEPATVDWAFDLTKTNMQTMYEQSEWGWKDREKREEMTDDRAWYLIAWENSSIPVAFSHFRFDVECGDEVLYCYEVQLESKVRRKGLGKFLIQILQLMANSTQMKKVMLTVFKHNHGAYQFFREALQFEIDDSSPSMSGCCGEDCSYEILSRRTKFGDSQHSHTGGHCGGCCH</sequence>
<organism>
    <name type="scientific">Mus musculus</name>
    <name type="common">Mouse</name>
    <dbReference type="NCBI Taxonomy" id="10090"/>
    <lineage>
        <taxon>Eukaryota</taxon>
        <taxon>Metazoa</taxon>
        <taxon>Chordata</taxon>
        <taxon>Craniata</taxon>
        <taxon>Vertebrata</taxon>
        <taxon>Euteleostomi</taxon>
        <taxon>Mammalia</taxon>
        <taxon>Eutheria</taxon>
        <taxon>Euarchontoglires</taxon>
        <taxon>Glires</taxon>
        <taxon>Rodentia</taxon>
        <taxon>Myomorpha</taxon>
        <taxon>Muroidea</taxon>
        <taxon>Muridae</taxon>
        <taxon>Murinae</taxon>
        <taxon>Mus</taxon>
        <taxon>Mus</taxon>
    </lineage>
</organism>
<evidence type="ECO:0000250" key="1">
    <source>
        <dbReference type="UniProtKB" id="Q86UY6"/>
    </source>
</evidence>
<evidence type="ECO:0000255" key="2"/>
<evidence type="ECO:0000255" key="3">
    <source>
        <dbReference type="PROSITE-ProRule" id="PRU00532"/>
    </source>
</evidence>
<evidence type="ECO:0000269" key="4">
    <source>
    </source>
</evidence>
<evidence type="ECO:0000303" key="5">
    <source>
    </source>
</evidence>
<evidence type="ECO:0000303" key="6">
    <source>
    </source>
</evidence>
<evidence type="ECO:0000303" key="7">
    <source>
    </source>
</evidence>
<evidence type="ECO:0000305" key="8"/>
<evidence type="ECO:0000312" key="9">
    <source>
        <dbReference type="MGI" id="MGI:1918249"/>
    </source>
</evidence>
<accession>Q8VE10</accession>
<accession>Q3V3R7</accession>
<accession>Q6PE89</accession>
<accession>Q9D4I5</accession>
<comment type="function">
    <text evidence="1 4">N-alpha-acetyltransferase that specifically mediates the acetylation of the N-terminal residues of histones H4 and H2A (By similarity). In contrast to other N-alpha-acetyltransferase, has a very specific selectivity for histones H4 and H2A N-terminus and specifically recognizes the 'Ser-Gly-Arg-Gly sequence' (By similarity). Acts as a negative regulator of apoptosis (By similarity). May play a role in hepatic lipid metabolism (PubMed:22231784).</text>
</comment>
<comment type="catalytic activity">
    <reaction evidence="1">
        <text>N-terminal L-seryl-[histone H4] + acetyl-CoA = N-terminal N(alpha)-acetyl-L-seryl-[histone H4] + CoA + H(+)</text>
        <dbReference type="Rhea" id="RHEA:50596"/>
        <dbReference type="Rhea" id="RHEA-COMP:12740"/>
        <dbReference type="Rhea" id="RHEA-COMP:12743"/>
        <dbReference type="ChEBI" id="CHEBI:15378"/>
        <dbReference type="ChEBI" id="CHEBI:57287"/>
        <dbReference type="ChEBI" id="CHEBI:57288"/>
        <dbReference type="ChEBI" id="CHEBI:64738"/>
        <dbReference type="ChEBI" id="CHEBI:83690"/>
        <dbReference type="EC" id="2.3.1.257"/>
    </reaction>
</comment>
<comment type="catalytic activity">
    <reaction evidence="1">
        <text>N-terminal L-seryl-[histone H2A] + acetyl-CoA = N-terminal N(alpha)-acetyl-L-seryl-[histone H2A] + CoA + H(+)</text>
        <dbReference type="Rhea" id="RHEA:50600"/>
        <dbReference type="Rhea" id="RHEA-COMP:12742"/>
        <dbReference type="Rhea" id="RHEA-COMP:12744"/>
        <dbReference type="ChEBI" id="CHEBI:15378"/>
        <dbReference type="ChEBI" id="CHEBI:57287"/>
        <dbReference type="ChEBI" id="CHEBI:57288"/>
        <dbReference type="ChEBI" id="CHEBI:64738"/>
        <dbReference type="ChEBI" id="CHEBI:83690"/>
        <dbReference type="EC" id="2.3.1.257"/>
    </reaction>
</comment>
<comment type="subcellular location">
    <subcellularLocation>
        <location evidence="1">Cytoplasm</location>
    </subcellularLocation>
    <subcellularLocation>
        <location evidence="1">Nucleus</location>
    </subcellularLocation>
</comment>
<comment type="alternative products">
    <event type="alternative splicing"/>
    <isoform>
        <id>Q8VE10-1</id>
        <name>1</name>
        <sequence type="displayed"/>
    </isoform>
    <isoform>
        <id>Q8VE10-2</id>
        <name>2</name>
        <sequence type="described" ref="VSP_024745"/>
    </isoform>
    <isoform>
        <id>Q8VE10-3</id>
        <name>3</name>
        <sequence type="described" ref="VSP_024744 VSP_024746"/>
    </isoform>
</comment>
<comment type="disruption phenotype">
    <text evidence="4">Liver-specific knockout male mice have decreased body mass and are protected from age-associated hepatic steatosis. Male mice show a reduction in the liver triglyceride and free fatty acid levels. No effect on liver cholesterol level, liver weight, and liver function is observed.</text>
</comment>
<comment type="similarity">
    <text evidence="8">Belongs to the acetyltransferase family. NAA40 subfamily.</text>
</comment>
<comment type="sequence caution" evidence="8">
    <conflict type="frameshift">
        <sequence resource="EMBL-CDS" id="BAB30275"/>
    </conflict>
</comment>
<gene>
    <name evidence="9" type="primary">Naa40</name>
    <name type="synonym">Nat11</name>
    <name evidence="7" type="synonym">Patt1</name>
</gene>
<proteinExistence type="evidence at protein level"/>
<feature type="initiator methionine" description="Removed" evidence="2">
    <location>
        <position position="1"/>
    </location>
</feature>
<feature type="chain" id="PRO_0000284898" description="N-alpha-acetyltransferase 40">
    <location>
        <begin position="2"/>
        <end position="237"/>
    </location>
</feature>
<feature type="domain" description="N-acetyltransferase" evidence="3">
    <location>
        <begin position="63"/>
        <end position="216"/>
    </location>
</feature>
<feature type="binding site" evidence="1">
    <location>
        <position position="85"/>
    </location>
    <ligand>
        <name>substrate</name>
    </ligand>
</feature>
<feature type="binding site" evidence="1">
    <location>
        <begin position="127"/>
        <end position="129"/>
    </location>
    <ligand>
        <name>substrate</name>
    </ligand>
</feature>
<feature type="binding site" evidence="1">
    <location>
        <position position="138"/>
    </location>
    <ligand>
        <name>substrate</name>
    </ligand>
</feature>
<feature type="binding site" evidence="1">
    <location>
        <begin position="140"/>
        <end position="142"/>
    </location>
    <ligand>
        <name>acetyl-CoA</name>
        <dbReference type="ChEBI" id="CHEBI:57288"/>
    </ligand>
</feature>
<feature type="binding site" evidence="1">
    <location>
        <begin position="148"/>
        <end position="153"/>
    </location>
    <ligand>
        <name>acetyl-CoA</name>
        <dbReference type="ChEBI" id="CHEBI:57288"/>
    </ligand>
</feature>
<feature type="binding site" evidence="1">
    <location>
        <position position="174"/>
    </location>
    <ligand>
        <name>substrate</name>
    </ligand>
</feature>
<feature type="binding site" evidence="1">
    <location>
        <position position="179"/>
    </location>
    <ligand>
        <name>acetyl-CoA</name>
        <dbReference type="ChEBI" id="CHEBI:57288"/>
    </ligand>
</feature>
<feature type="binding site" evidence="1">
    <location>
        <position position="197"/>
    </location>
    <ligand>
        <name>substrate</name>
    </ligand>
</feature>
<feature type="binding site" evidence="1">
    <location>
        <position position="211"/>
    </location>
    <ligand>
        <name>substrate</name>
    </ligand>
</feature>
<feature type="site" description="Essential for catalytic activity" evidence="1">
    <location>
        <position position="139"/>
    </location>
</feature>
<feature type="lipid moiety-binding region" description="N-myristoyl glycine" evidence="2">
    <location>
        <position position="2"/>
    </location>
</feature>
<feature type="splice variant" id="VSP_024744" description="In isoform 3." evidence="5">
    <location>
        <begin position="1"/>
        <end position="117"/>
    </location>
</feature>
<feature type="splice variant" id="VSP_024745" description="In isoform 2." evidence="6">
    <original>MGRKSSKAKEKKQKRLEERAAMDAVCAKVDAANRL</original>
    <variation>MSALCPQF</variation>
    <location>
        <begin position="1"/>
        <end position="35"/>
    </location>
</feature>
<feature type="splice variant" id="VSP_024746" description="In isoform 3." evidence="5">
    <original>PVAFSHFRFDVECGDEVLYC</original>
    <variation>MGLQAPSLGLGAHSSAFSVS</variation>
    <location>
        <begin position="118"/>
        <end position="137"/>
    </location>
</feature>
<dbReference type="EC" id="2.3.1.257" evidence="1"/>
<dbReference type="EMBL" id="AK016504">
    <property type="protein sequence ID" value="BAB30275.1"/>
    <property type="status" value="ALT_FRAME"/>
    <property type="molecule type" value="mRNA"/>
</dbReference>
<dbReference type="EMBL" id="AK033896">
    <property type="protein sequence ID" value="BAC28506.1"/>
    <property type="molecule type" value="mRNA"/>
</dbReference>
<dbReference type="EMBL" id="AK035418">
    <property type="protein sequence ID" value="BAE20496.1"/>
    <property type="molecule type" value="mRNA"/>
</dbReference>
<dbReference type="EMBL" id="AK170548">
    <property type="protein sequence ID" value="BAE41873.1"/>
    <property type="molecule type" value="mRNA"/>
</dbReference>
<dbReference type="EMBL" id="BC020020">
    <property type="protein sequence ID" value="AAH20020.1"/>
    <property type="molecule type" value="mRNA"/>
</dbReference>
<dbReference type="EMBL" id="BC058212">
    <property type="protein sequence ID" value="AAH58212.1"/>
    <property type="molecule type" value="mRNA"/>
</dbReference>
<dbReference type="CCDS" id="CCDS50377.1">
    <molecule id="Q8VE10-1"/>
</dbReference>
<dbReference type="RefSeq" id="NP_081919.1">
    <molecule id="Q8VE10-1"/>
    <property type="nucleotide sequence ID" value="NM_027643.1"/>
</dbReference>
<dbReference type="SMR" id="Q8VE10"/>
<dbReference type="BioGRID" id="214405">
    <property type="interactions" value="2"/>
</dbReference>
<dbReference type="FunCoup" id="Q8VE10">
    <property type="interactions" value="3986"/>
</dbReference>
<dbReference type="STRING" id="10090.ENSMUSP00000025675"/>
<dbReference type="GlyGen" id="Q8VE10">
    <property type="glycosylation" value="1 site, 1 O-linked glycan (1 site)"/>
</dbReference>
<dbReference type="iPTMnet" id="Q8VE10"/>
<dbReference type="PhosphoSitePlus" id="Q8VE10"/>
<dbReference type="SwissPalm" id="Q8VE10"/>
<dbReference type="PaxDb" id="10090-ENSMUSP00000025675"/>
<dbReference type="PeptideAtlas" id="Q8VE10"/>
<dbReference type="ProteomicsDB" id="293612">
    <molecule id="Q8VE10-1"/>
</dbReference>
<dbReference type="ProteomicsDB" id="293613">
    <molecule id="Q8VE10-2"/>
</dbReference>
<dbReference type="ProteomicsDB" id="293614">
    <molecule id="Q8VE10-3"/>
</dbReference>
<dbReference type="Pumba" id="Q8VE10"/>
<dbReference type="Antibodypedia" id="43913">
    <property type="antibodies" value="73 antibodies from 23 providers"/>
</dbReference>
<dbReference type="Ensembl" id="ENSMUST00000025675.11">
    <molecule id="Q8VE10-1"/>
    <property type="protein sequence ID" value="ENSMUSP00000025675.10"/>
    <property type="gene ID" value="ENSMUSG00000024764.11"/>
</dbReference>
<dbReference type="GeneID" id="70999"/>
<dbReference type="KEGG" id="mmu:70999"/>
<dbReference type="UCSC" id="uc008gkk.2">
    <molecule id="Q8VE10-3"/>
    <property type="organism name" value="mouse"/>
</dbReference>
<dbReference type="UCSC" id="uc008gkl.2">
    <molecule id="Q8VE10-1"/>
    <property type="organism name" value="mouse"/>
</dbReference>
<dbReference type="AGR" id="MGI:1918249"/>
<dbReference type="CTD" id="79829"/>
<dbReference type="MGI" id="MGI:1918249">
    <property type="gene designation" value="Naa40"/>
</dbReference>
<dbReference type="VEuPathDB" id="HostDB:ENSMUSG00000024764"/>
<dbReference type="eggNOG" id="KOG2488">
    <property type="taxonomic scope" value="Eukaryota"/>
</dbReference>
<dbReference type="GeneTree" id="ENSGT00390000014903"/>
<dbReference type="HOGENOM" id="CLU_051699_4_0_1"/>
<dbReference type="InParanoid" id="Q8VE10"/>
<dbReference type="OMA" id="AYLHYRF"/>
<dbReference type="OrthoDB" id="424551at2759"/>
<dbReference type="PhylomeDB" id="Q8VE10"/>
<dbReference type="TreeFam" id="TF315129"/>
<dbReference type="BioGRID-ORCS" id="70999">
    <property type="hits" value="3 hits in 77 CRISPR screens"/>
</dbReference>
<dbReference type="ChiTaRS" id="Naa40">
    <property type="organism name" value="mouse"/>
</dbReference>
<dbReference type="PRO" id="PR:Q8VE10"/>
<dbReference type="Proteomes" id="UP000000589">
    <property type="component" value="Chromosome 19"/>
</dbReference>
<dbReference type="RNAct" id="Q8VE10">
    <property type="molecule type" value="protein"/>
</dbReference>
<dbReference type="Bgee" id="ENSMUSG00000024764">
    <property type="expression patterns" value="Expressed in spermatocyte and 258 other cell types or tissues"/>
</dbReference>
<dbReference type="ExpressionAtlas" id="Q8VE10">
    <property type="expression patterns" value="baseline and differential"/>
</dbReference>
<dbReference type="GO" id="GO:0034451">
    <property type="term" value="C:centriolar satellite"/>
    <property type="evidence" value="ECO:0007669"/>
    <property type="project" value="Ensembl"/>
</dbReference>
<dbReference type="GO" id="GO:0005829">
    <property type="term" value="C:cytosol"/>
    <property type="evidence" value="ECO:0007669"/>
    <property type="project" value="Ensembl"/>
</dbReference>
<dbReference type="GO" id="GO:0005654">
    <property type="term" value="C:nucleoplasm"/>
    <property type="evidence" value="ECO:0007669"/>
    <property type="project" value="Ensembl"/>
</dbReference>
<dbReference type="GO" id="GO:0043998">
    <property type="term" value="F:histone H2A acetyltransferase activity"/>
    <property type="evidence" value="ECO:0000250"/>
    <property type="project" value="UniProtKB"/>
</dbReference>
<dbReference type="GO" id="GO:0010485">
    <property type="term" value="F:histone H4 acetyltransferase activity"/>
    <property type="evidence" value="ECO:0000250"/>
    <property type="project" value="UniProtKB"/>
</dbReference>
<dbReference type="GO" id="GO:1990189">
    <property type="term" value="F:protein N-terminal-serine acetyltransferase activity"/>
    <property type="evidence" value="ECO:0000250"/>
    <property type="project" value="UniProtKB"/>
</dbReference>
<dbReference type="GO" id="GO:0006629">
    <property type="term" value="P:lipid metabolic process"/>
    <property type="evidence" value="ECO:0000315"/>
    <property type="project" value="MGI"/>
</dbReference>
<dbReference type="FunFam" id="3.40.630.30:FF:000033">
    <property type="entry name" value="N-alpha-acetyltransferase 40 isoform X1"/>
    <property type="match status" value="1"/>
</dbReference>
<dbReference type="Gene3D" id="3.40.630.30">
    <property type="match status" value="1"/>
</dbReference>
<dbReference type="InterPro" id="IPR016181">
    <property type="entry name" value="Acyl_CoA_acyltransferase"/>
</dbReference>
<dbReference type="InterPro" id="IPR000182">
    <property type="entry name" value="GNAT_dom"/>
</dbReference>
<dbReference type="InterPro" id="IPR039949">
    <property type="entry name" value="NAA40"/>
</dbReference>
<dbReference type="PANTHER" id="PTHR20531">
    <property type="entry name" value="N-ALPHA-ACETYLTRANSFERASE 40"/>
    <property type="match status" value="1"/>
</dbReference>
<dbReference type="PANTHER" id="PTHR20531:SF1">
    <property type="entry name" value="N-ALPHA-ACETYLTRANSFERASE 40"/>
    <property type="match status" value="1"/>
</dbReference>
<dbReference type="Pfam" id="PF00583">
    <property type="entry name" value="Acetyltransf_1"/>
    <property type="match status" value="1"/>
</dbReference>
<dbReference type="SUPFAM" id="SSF55729">
    <property type="entry name" value="Acyl-CoA N-acyltransferases (Nat)"/>
    <property type="match status" value="1"/>
</dbReference>
<dbReference type="PROSITE" id="PS51186">
    <property type="entry name" value="GNAT"/>
    <property type="match status" value="1"/>
</dbReference>
<keyword id="KW-0012">Acyltransferase</keyword>
<keyword id="KW-0025">Alternative splicing</keyword>
<keyword id="KW-0963">Cytoplasm</keyword>
<keyword id="KW-0449">Lipoprotein</keyword>
<keyword id="KW-0519">Myristate</keyword>
<keyword id="KW-0539">Nucleus</keyword>
<keyword id="KW-1185">Reference proteome</keyword>
<keyword id="KW-0808">Transferase</keyword>
<reference key="1">
    <citation type="journal article" date="2005" name="Science">
        <title>The transcriptional landscape of the mammalian genome.</title>
        <authorList>
            <person name="Carninci P."/>
            <person name="Kasukawa T."/>
            <person name="Katayama S."/>
            <person name="Gough J."/>
            <person name="Frith M.C."/>
            <person name="Maeda N."/>
            <person name="Oyama R."/>
            <person name="Ravasi T."/>
            <person name="Lenhard B."/>
            <person name="Wells C."/>
            <person name="Kodzius R."/>
            <person name="Shimokawa K."/>
            <person name="Bajic V.B."/>
            <person name="Brenner S.E."/>
            <person name="Batalov S."/>
            <person name="Forrest A.R."/>
            <person name="Zavolan M."/>
            <person name="Davis M.J."/>
            <person name="Wilming L.G."/>
            <person name="Aidinis V."/>
            <person name="Allen J.E."/>
            <person name="Ambesi-Impiombato A."/>
            <person name="Apweiler R."/>
            <person name="Aturaliya R.N."/>
            <person name="Bailey T.L."/>
            <person name="Bansal M."/>
            <person name="Baxter L."/>
            <person name="Beisel K.W."/>
            <person name="Bersano T."/>
            <person name="Bono H."/>
            <person name="Chalk A.M."/>
            <person name="Chiu K.P."/>
            <person name="Choudhary V."/>
            <person name="Christoffels A."/>
            <person name="Clutterbuck D.R."/>
            <person name="Crowe M.L."/>
            <person name="Dalla E."/>
            <person name="Dalrymple B.P."/>
            <person name="de Bono B."/>
            <person name="Della Gatta G."/>
            <person name="di Bernardo D."/>
            <person name="Down T."/>
            <person name="Engstrom P."/>
            <person name="Fagiolini M."/>
            <person name="Faulkner G."/>
            <person name="Fletcher C.F."/>
            <person name="Fukushima T."/>
            <person name="Furuno M."/>
            <person name="Futaki S."/>
            <person name="Gariboldi M."/>
            <person name="Georgii-Hemming P."/>
            <person name="Gingeras T.R."/>
            <person name="Gojobori T."/>
            <person name="Green R.E."/>
            <person name="Gustincich S."/>
            <person name="Harbers M."/>
            <person name="Hayashi Y."/>
            <person name="Hensch T.K."/>
            <person name="Hirokawa N."/>
            <person name="Hill D."/>
            <person name="Huminiecki L."/>
            <person name="Iacono M."/>
            <person name="Ikeo K."/>
            <person name="Iwama A."/>
            <person name="Ishikawa T."/>
            <person name="Jakt M."/>
            <person name="Kanapin A."/>
            <person name="Katoh M."/>
            <person name="Kawasawa Y."/>
            <person name="Kelso J."/>
            <person name="Kitamura H."/>
            <person name="Kitano H."/>
            <person name="Kollias G."/>
            <person name="Krishnan S.P."/>
            <person name="Kruger A."/>
            <person name="Kummerfeld S.K."/>
            <person name="Kurochkin I.V."/>
            <person name="Lareau L.F."/>
            <person name="Lazarevic D."/>
            <person name="Lipovich L."/>
            <person name="Liu J."/>
            <person name="Liuni S."/>
            <person name="McWilliam S."/>
            <person name="Madan Babu M."/>
            <person name="Madera M."/>
            <person name="Marchionni L."/>
            <person name="Matsuda H."/>
            <person name="Matsuzawa S."/>
            <person name="Miki H."/>
            <person name="Mignone F."/>
            <person name="Miyake S."/>
            <person name="Morris K."/>
            <person name="Mottagui-Tabar S."/>
            <person name="Mulder N."/>
            <person name="Nakano N."/>
            <person name="Nakauchi H."/>
            <person name="Ng P."/>
            <person name="Nilsson R."/>
            <person name="Nishiguchi S."/>
            <person name="Nishikawa S."/>
            <person name="Nori F."/>
            <person name="Ohara O."/>
            <person name="Okazaki Y."/>
            <person name="Orlando V."/>
            <person name="Pang K.C."/>
            <person name="Pavan W.J."/>
            <person name="Pavesi G."/>
            <person name="Pesole G."/>
            <person name="Petrovsky N."/>
            <person name="Piazza S."/>
            <person name="Reed J."/>
            <person name="Reid J.F."/>
            <person name="Ring B.Z."/>
            <person name="Ringwald M."/>
            <person name="Rost B."/>
            <person name="Ruan Y."/>
            <person name="Salzberg S.L."/>
            <person name="Sandelin A."/>
            <person name="Schneider C."/>
            <person name="Schoenbach C."/>
            <person name="Sekiguchi K."/>
            <person name="Semple C.A."/>
            <person name="Seno S."/>
            <person name="Sessa L."/>
            <person name="Sheng Y."/>
            <person name="Shibata Y."/>
            <person name="Shimada H."/>
            <person name="Shimada K."/>
            <person name="Silva D."/>
            <person name="Sinclair B."/>
            <person name="Sperling S."/>
            <person name="Stupka E."/>
            <person name="Sugiura K."/>
            <person name="Sultana R."/>
            <person name="Takenaka Y."/>
            <person name="Taki K."/>
            <person name="Tammoja K."/>
            <person name="Tan S.L."/>
            <person name="Tang S."/>
            <person name="Taylor M.S."/>
            <person name="Tegner J."/>
            <person name="Teichmann S.A."/>
            <person name="Ueda H.R."/>
            <person name="van Nimwegen E."/>
            <person name="Verardo R."/>
            <person name="Wei C.L."/>
            <person name="Yagi K."/>
            <person name="Yamanishi H."/>
            <person name="Zabarovsky E."/>
            <person name="Zhu S."/>
            <person name="Zimmer A."/>
            <person name="Hide W."/>
            <person name="Bult C."/>
            <person name="Grimmond S.M."/>
            <person name="Teasdale R.D."/>
            <person name="Liu E.T."/>
            <person name="Brusic V."/>
            <person name="Quackenbush J."/>
            <person name="Wahlestedt C."/>
            <person name="Mattick J.S."/>
            <person name="Hume D.A."/>
            <person name="Kai C."/>
            <person name="Sasaki D."/>
            <person name="Tomaru Y."/>
            <person name="Fukuda S."/>
            <person name="Kanamori-Katayama M."/>
            <person name="Suzuki M."/>
            <person name="Aoki J."/>
            <person name="Arakawa T."/>
            <person name="Iida J."/>
            <person name="Imamura K."/>
            <person name="Itoh M."/>
            <person name="Kato T."/>
            <person name="Kawaji H."/>
            <person name="Kawagashira N."/>
            <person name="Kawashima T."/>
            <person name="Kojima M."/>
            <person name="Kondo S."/>
            <person name="Konno H."/>
            <person name="Nakano K."/>
            <person name="Ninomiya N."/>
            <person name="Nishio T."/>
            <person name="Okada M."/>
            <person name="Plessy C."/>
            <person name="Shibata K."/>
            <person name="Shiraki T."/>
            <person name="Suzuki S."/>
            <person name="Tagami M."/>
            <person name="Waki K."/>
            <person name="Watahiki A."/>
            <person name="Okamura-Oho Y."/>
            <person name="Suzuki H."/>
            <person name="Kawai J."/>
            <person name="Hayashizaki Y."/>
        </authorList>
    </citation>
    <scope>NUCLEOTIDE SEQUENCE [LARGE SCALE MRNA] (ISOFORMS 1 AND 2)</scope>
    <source>
        <strain>C57BL/6J</strain>
        <strain>NOD</strain>
        <tissue>Diencephalon</tissue>
        <tissue>Testis</tissue>
        <tissue>Urinary bladder</tissue>
    </source>
</reference>
<reference key="2">
    <citation type="journal article" date="2004" name="Genome Res.">
        <title>The status, quality, and expansion of the NIH full-length cDNA project: the Mammalian Gene Collection (MGC).</title>
        <authorList>
            <consortium name="The MGC Project Team"/>
        </authorList>
    </citation>
    <scope>NUCLEOTIDE SEQUENCE [LARGE SCALE MRNA] (ISOFORMS 1 AND 3)</scope>
    <source>
        <strain>FVB/N</strain>
        <tissue>Eye</tissue>
        <tissue>Mammary tumor</tissue>
    </source>
</reference>
<reference key="3">
    <citation type="journal article" date="2010" name="Cell">
        <title>A tissue-specific atlas of mouse protein phosphorylation and expression.</title>
        <authorList>
            <person name="Huttlin E.L."/>
            <person name="Jedrychowski M.P."/>
            <person name="Elias J.E."/>
            <person name="Goswami T."/>
            <person name="Rad R."/>
            <person name="Beausoleil S.A."/>
            <person name="Villen J."/>
            <person name="Haas W."/>
            <person name="Sowa M.E."/>
            <person name="Gygi S.P."/>
        </authorList>
    </citation>
    <scope>IDENTIFICATION BY MASS SPECTROMETRY [LARGE SCALE ANALYSIS]</scope>
    <source>
        <tissue>Heart</tissue>
        <tissue>Kidney</tissue>
        <tissue>Spleen</tissue>
        <tissue>Testis</tissue>
    </source>
</reference>
<reference key="4">
    <citation type="journal article" date="2012" name="J. Lipid Res.">
        <title>Liver Patt1 deficiency protects male mice from age-associated but not high-fat diet-induced hepatic steatosis.</title>
        <authorList>
            <person name="Liu Y."/>
            <person name="Zhou D."/>
            <person name="Zhang F."/>
            <person name="Tu Y."/>
            <person name="Xia Y."/>
            <person name="Wang H."/>
            <person name="Zhou B."/>
            <person name="Zhang Y."/>
            <person name="Wu J."/>
            <person name="Gao X."/>
            <person name="He Z."/>
            <person name="Zhai Q."/>
        </authorList>
    </citation>
    <scope>FUNCTION</scope>
    <scope>DISRUPTION PHENOTYPE</scope>
</reference>
<name>NAA40_MOUSE</name>
<protein>
    <recommendedName>
        <fullName evidence="9">N-alpha-acetyltransferase 40</fullName>
        <ecNumber evidence="1">2.3.1.257</ecNumber>
    </recommendedName>
    <alternativeName>
        <fullName>N-acetyltransferase 11</fullName>
    </alternativeName>
    <alternativeName>
        <fullName evidence="1">N-alpha-acetyltransferase D</fullName>
        <shortName evidence="1">NatD</shortName>
    </alternativeName>
    <alternativeName>
        <fullName evidence="7">Protein acetyltransferase 1</fullName>
    </alternativeName>
</protein>